<proteinExistence type="inferred from homology"/>
<comment type="similarity">
    <text evidence="1">Belongs to the UPF0173 family.</text>
</comment>
<reference key="1">
    <citation type="journal article" date="2008" name="Antimicrob. Agents Chemother.">
        <title>Mutated response regulator graR is responsible for phenotypic conversion of Staphylococcus aureus from heterogeneous vancomycin-intermediate resistance to vancomycin-intermediate resistance.</title>
        <authorList>
            <person name="Neoh H.-M."/>
            <person name="Cui L."/>
            <person name="Yuzawa H."/>
            <person name="Takeuchi F."/>
            <person name="Matsuo M."/>
            <person name="Hiramatsu K."/>
        </authorList>
    </citation>
    <scope>NUCLEOTIDE SEQUENCE [LARGE SCALE GENOMIC DNA]</scope>
    <source>
        <strain>Mu3 / ATCC 700698</strain>
    </source>
</reference>
<dbReference type="EMBL" id="AP009324">
    <property type="protein sequence ID" value="BAF78576.1"/>
    <property type="molecule type" value="Genomic_DNA"/>
</dbReference>
<dbReference type="RefSeq" id="WP_000777188.1">
    <property type="nucleotide sequence ID" value="NZ_CTYB01000008.1"/>
</dbReference>
<dbReference type="SMR" id="A7X3D5"/>
<dbReference type="KEGG" id="saw:SAHV_1693"/>
<dbReference type="HOGENOM" id="CLU_070010_4_1_9"/>
<dbReference type="GO" id="GO:0016787">
    <property type="term" value="F:hydrolase activity"/>
    <property type="evidence" value="ECO:0007669"/>
    <property type="project" value="UniProtKB-UniRule"/>
</dbReference>
<dbReference type="CDD" id="cd06262">
    <property type="entry name" value="metallo-hydrolase-like_MBL-fold"/>
    <property type="match status" value="1"/>
</dbReference>
<dbReference type="Gene3D" id="3.60.15.10">
    <property type="entry name" value="Ribonuclease Z/Hydroxyacylglutathione hydrolase-like"/>
    <property type="match status" value="1"/>
</dbReference>
<dbReference type="HAMAP" id="MF_00457">
    <property type="entry name" value="UPF0173"/>
    <property type="match status" value="1"/>
</dbReference>
<dbReference type="InterPro" id="IPR001279">
    <property type="entry name" value="Metallo-B-lactamas"/>
</dbReference>
<dbReference type="InterPro" id="IPR036866">
    <property type="entry name" value="RibonucZ/Hydroxyglut_hydro"/>
</dbReference>
<dbReference type="InterPro" id="IPR022877">
    <property type="entry name" value="UPF0173"/>
</dbReference>
<dbReference type="InterPro" id="IPR050114">
    <property type="entry name" value="UPF0173_UPF0282_UlaG_hydrolase"/>
</dbReference>
<dbReference type="NCBIfam" id="NF001911">
    <property type="entry name" value="PRK00685.1"/>
    <property type="match status" value="1"/>
</dbReference>
<dbReference type="PANTHER" id="PTHR43546:SF3">
    <property type="entry name" value="UPF0173 METAL-DEPENDENT HYDROLASE MJ1163"/>
    <property type="match status" value="1"/>
</dbReference>
<dbReference type="PANTHER" id="PTHR43546">
    <property type="entry name" value="UPF0173 METAL-DEPENDENT HYDROLASE MJ1163-RELATED"/>
    <property type="match status" value="1"/>
</dbReference>
<dbReference type="Pfam" id="PF12706">
    <property type="entry name" value="Lactamase_B_2"/>
    <property type="match status" value="1"/>
</dbReference>
<dbReference type="SMART" id="SM00849">
    <property type="entry name" value="Lactamase_B"/>
    <property type="match status" value="1"/>
</dbReference>
<dbReference type="SUPFAM" id="SSF56281">
    <property type="entry name" value="Metallo-hydrolase/oxidoreductase"/>
    <property type="match status" value="1"/>
</dbReference>
<accession>A7X3D5</accession>
<keyword id="KW-0378">Hydrolase</keyword>
<sequence>MKLSFHGQSTIYLEGNNKKVIVDPFISNNPKCDLNIETVQVDYIVLTHGHFDHFGDVVELAKKTGATVIGSAEMADYLSSYHGVENVHGMNIGGKANFDFGSVKFVQAFHSSSFTHENGIPVYLGMPMGIVFEVEGKTIYHTGDTGLFSDMSLIAKRHPVDVCFVPIGDNFTMGIDDASYAINEFIKPKISVPIHYDTFPLIEQDPQQFKDAVNVGDVQILKPGESVQF</sequence>
<protein>
    <recommendedName>
        <fullName evidence="1">UPF0173 metal-dependent hydrolase SAHV_1693</fullName>
    </recommendedName>
</protein>
<gene>
    <name type="ordered locus">SAHV_1693</name>
</gene>
<evidence type="ECO:0000255" key="1">
    <source>
        <dbReference type="HAMAP-Rule" id="MF_00457"/>
    </source>
</evidence>
<organism>
    <name type="scientific">Staphylococcus aureus (strain Mu3 / ATCC 700698)</name>
    <dbReference type="NCBI Taxonomy" id="418127"/>
    <lineage>
        <taxon>Bacteria</taxon>
        <taxon>Bacillati</taxon>
        <taxon>Bacillota</taxon>
        <taxon>Bacilli</taxon>
        <taxon>Bacillales</taxon>
        <taxon>Staphylococcaceae</taxon>
        <taxon>Staphylococcus</taxon>
    </lineage>
</organism>
<name>Y1693_STAA1</name>
<feature type="chain" id="PRO_1000013509" description="UPF0173 metal-dependent hydrolase SAHV_1693">
    <location>
        <begin position="1"/>
        <end position="229"/>
    </location>
</feature>